<comment type="catalytic activity">
    <reaction evidence="1">
        <text>L-aspartate + NH4(+) + ATP = L-asparagine + AMP + diphosphate + H(+)</text>
        <dbReference type="Rhea" id="RHEA:11372"/>
        <dbReference type="ChEBI" id="CHEBI:15378"/>
        <dbReference type="ChEBI" id="CHEBI:28938"/>
        <dbReference type="ChEBI" id="CHEBI:29991"/>
        <dbReference type="ChEBI" id="CHEBI:30616"/>
        <dbReference type="ChEBI" id="CHEBI:33019"/>
        <dbReference type="ChEBI" id="CHEBI:58048"/>
        <dbReference type="ChEBI" id="CHEBI:456215"/>
        <dbReference type="EC" id="6.3.1.1"/>
    </reaction>
</comment>
<comment type="pathway">
    <text evidence="1">Amino-acid biosynthesis; L-asparagine biosynthesis; L-asparagine from L-aspartate (ammonia route): step 1/1.</text>
</comment>
<comment type="subcellular location">
    <subcellularLocation>
        <location evidence="1">Cytoplasm</location>
    </subcellularLocation>
</comment>
<comment type="similarity">
    <text evidence="1">Belongs to the class-II aminoacyl-tRNA synthetase family. AsnA subfamily.</text>
</comment>
<organism>
    <name type="scientific">Shigella flexneri</name>
    <dbReference type="NCBI Taxonomy" id="623"/>
    <lineage>
        <taxon>Bacteria</taxon>
        <taxon>Pseudomonadati</taxon>
        <taxon>Pseudomonadota</taxon>
        <taxon>Gammaproteobacteria</taxon>
        <taxon>Enterobacterales</taxon>
        <taxon>Enterobacteriaceae</taxon>
        <taxon>Shigella</taxon>
    </lineage>
</organism>
<protein>
    <recommendedName>
        <fullName evidence="1">Aspartate--ammonia ligase</fullName>
        <ecNumber evidence="1">6.3.1.1</ecNumber>
    </recommendedName>
    <alternativeName>
        <fullName evidence="1">Asparagine synthetase A</fullName>
    </alternativeName>
</protein>
<feature type="chain" id="PRO_0000195888" description="Aspartate--ammonia ligase">
    <location>
        <begin position="1"/>
        <end position="330"/>
    </location>
</feature>
<proteinExistence type="inferred from homology"/>
<dbReference type="EC" id="6.3.1.1" evidence="1"/>
<dbReference type="EMBL" id="AE005674">
    <property type="protein sequence ID" value="AAN45264.1"/>
    <property type="molecule type" value="Genomic_DNA"/>
</dbReference>
<dbReference type="EMBL" id="AE014073">
    <property type="protein sequence ID" value="AAP18933.1"/>
    <property type="molecule type" value="Genomic_DNA"/>
</dbReference>
<dbReference type="RefSeq" id="NP_709557.1">
    <property type="nucleotide sequence ID" value="NC_004337.2"/>
</dbReference>
<dbReference type="RefSeq" id="WP_000845131.1">
    <property type="nucleotide sequence ID" value="NZ_WPGW01000050.1"/>
</dbReference>
<dbReference type="SMR" id="Q83PJ4"/>
<dbReference type="STRING" id="198214.SF3824"/>
<dbReference type="PaxDb" id="198214-SF3824"/>
<dbReference type="GeneID" id="1026039"/>
<dbReference type="KEGG" id="sfl:SF3824"/>
<dbReference type="KEGG" id="sfx:S3944"/>
<dbReference type="PATRIC" id="fig|198214.7.peg.4512"/>
<dbReference type="HOGENOM" id="CLU_071543_0_0_6"/>
<dbReference type="UniPathway" id="UPA00134">
    <property type="reaction ID" value="UER00194"/>
</dbReference>
<dbReference type="Proteomes" id="UP000001006">
    <property type="component" value="Chromosome"/>
</dbReference>
<dbReference type="Proteomes" id="UP000002673">
    <property type="component" value="Chromosome"/>
</dbReference>
<dbReference type="GO" id="GO:0005829">
    <property type="term" value="C:cytosol"/>
    <property type="evidence" value="ECO:0007669"/>
    <property type="project" value="TreeGrafter"/>
</dbReference>
<dbReference type="GO" id="GO:0004071">
    <property type="term" value="F:aspartate-ammonia ligase activity"/>
    <property type="evidence" value="ECO:0007669"/>
    <property type="project" value="UniProtKB-UniRule"/>
</dbReference>
<dbReference type="GO" id="GO:0005524">
    <property type="term" value="F:ATP binding"/>
    <property type="evidence" value="ECO:0007669"/>
    <property type="project" value="UniProtKB-UniRule"/>
</dbReference>
<dbReference type="GO" id="GO:0070981">
    <property type="term" value="P:L-asparagine biosynthetic process"/>
    <property type="evidence" value="ECO:0007669"/>
    <property type="project" value="UniProtKB-UniRule"/>
</dbReference>
<dbReference type="CDD" id="cd00645">
    <property type="entry name" value="AsnA"/>
    <property type="match status" value="1"/>
</dbReference>
<dbReference type="FunFam" id="3.30.930.10:FF:000025">
    <property type="entry name" value="Aspartate--ammonia ligase"/>
    <property type="match status" value="1"/>
</dbReference>
<dbReference type="Gene3D" id="3.30.930.10">
    <property type="entry name" value="Bira Bifunctional Protein, Domain 2"/>
    <property type="match status" value="1"/>
</dbReference>
<dbReference type="HAMAP" id="MF_00555">
    <property type="entry name" value="AsnA"/>
    <property type="match status" value="1"/>
</dbReference>
<dbReference type="InterPro" id="IPR006195">
    <property type="entry name" value="aa-tRNA-synth_II"/>
</dbReference>
<dbReference type="InterPro" id="IPR045864">
    <property type="entry name" value="aa-tRNA-synth_II/BPL/LPL"/>
</dbReference>
<dbReference type="InterPro" id="IPR004618">
    <property type="entry name" value="AsnA"/>
</dbReference>
<dbReference type="NCBIfam" id="TIGR00669">
    <property type="entry name" value="asnA"/>
    <property type="match status" value="1"/>
</dbReference>
<dbReference type="PANTHER" id="PTHR30073">
    <property type="entry name" value="ASPARTATE--AMMONIA LIGASE"/>
    <property type="match status" value="1"/>
</dbReference>
<dbReference type="PANTHER" id="PTHR30073:SF5">
    <property type="entry name" value="ASPARTATE--AMMONIA LIGASE"/>
    <property type="match status" value="1"/>
</dbReference>
<dbReference type="Pfam" id="PF03590">
    <property type="entry name" value="AsnA"/>
    <property type="match status" value="1"/>
</dbReference>
<dbReference type="PIRSF" id="PIRSF001555">
    <property type="entry name" value="Asp_ammon_ligase"/>
    <property type="match status" value="1"/>
</dbReference>
<dbReference type="SUPFAM" id="SSF55681">
    <property type="entry name" value="Class II aaRS and biotin synthetases"/>
    <property type="match status" value="1"/>
</dbReference>
<dbReference type="PROSITE" id="PS50862">
    <property type="entry name" value="AA_TRNA_LIGASE_II"/>
    <property type="match status" value="1"/>
</dbReference>
<gene>
    <name evidence="1" type="primary">asnA</name>
    <name type="ordered locus">SF3824</name>
    <name type="ordered locus">S3944</name>
</gene>
<keyword id="KW-0028">Amino-acid biosynthesis</keyword>
<keyword id="KW-0061">Asparagine biosynthesis</keyword>
<keyword id="KW-0067">ATP-binding</keyword>
<keyword id="KW-0963">Cytoplasm</keyword>
<keyword id="KW-0436">Ligase</keyword>
<keyword id="KW-0547">Nucleotide-binding</keyword>
<keyword id="KW-1185">Reference proteome</keyword>
<reference key="1">
    <citation type="journal article" date="2002" name="Nucleic Acids Res.">
        <title>Genome sequence of Shigella flexneri 2a: insights into pathogenicity through comparison with genomes of Escherichia coli K12 and O157.</title>
        <authorList>
            <person name="Jin Q."/>
            <person name="Yuan Z."/>
            <person name="Xu J."/>
            <person name="Wang Y."/>
            <person name="Shen Y."/>
            <person name="Lu W."/>
            <person name="Wang J."/>
            <person name="Liu H."/>
            <person name="Yang J."/>
            <person name="Yang F."/>
            <person name="Zhang X."/>
            <person name="Zhang J."/>
            <person name="Yang G."/>
            <person name="Wu H."/>
            <person name="Qu D."/>
            <person name="Dong J."/>
            <person name="Sun L."/>
            <person name="Xue Y."/>
            <person name="Zhao A."/>
            <person name="Gao Y."/>
            <person name="Zhu J."/>
            <person name="Kan B."/>
            <person name="Ding K."/>
            <person name="Chen S."/>
            <person name="Cheng H."/>
            <person name="Yao Z."/>
            <person name="He B."/>
            <person name="Chen R."/>
            <person name="Ma D."/>
            <person name="Qiang B."/>
            <person name="Wen Y."/>
            <person name="Hou Y."/>
            <person name="Yu J."/>
        </authorList>
    </citation>
    <scope>NUCLEOTIDE SEQUENCE [LARGE SCALE GENOMIC DNA]</scope>
    <source>
        <strain>301 / Serotype 2a</strain>
    </source>
</reference>
<reference key="2">
    <citation type="journal article" date="2003" name="Infect. Immun.">
        <title>Complete genome sequence and comparative genomics of Shigella flexneri serotype 2a strain 2457T.</title>
        <authorList>
            <person name="Wei J."/>
            <person name="Goldberg M.B."/>
            <person name="Burland V."/>
            <person name="Venkatesan M.M."/>
            <person name="Deng W."/>
            <person name="Fournier G."/>
            <person name="Mayhew G.F."/>
            <person name="Plunkett G. III"/>
            <person name="Rose D.J."/>
            <person name="Darling A."/>
            <person name="Mau B."/>
            <person name="Perna N.T."/>
            <person name="Payne S.M."/>
            <person name="Runyen-Janecky L.J."/>
            <person name="Zhou S."/>
            <person name="Schwartz D.C."/>
            <person name="Blattner F.R."/>
        </authorList>
    </citation>
    <scope>NUCLEOTIDE SEQUENCE [LARGE SCALE GENOMIC DNA]</scope>
    <source>
        <strain>ATCC 700930 / 2457T / Serotype 2a</strain>
    </source>
</reference>
<sequence>MKTAYIAKQRQISFVKSHFSRQLEERLGLIEVQAPILSRVGDGTQDNLSGCEKAVQVKVKALPDAQFEVVHSLAKWKRQTLGQHDFSAGEGLYTHMKALRPDEDRLSPLHSVYVDQWDWERVMGDGERQLSTLKSTVEAIWAGIKATEAAVNEEFGLAPFLPDQIHFVHSQELLSRYPDLDAKGRERAIAKDLGAVFLVGIGGKLSDGHRHDVRAPDYDDWSTPSELGHAGLNGDILVWNPVLEDAFELSSMGIRVDADTLKHQLALTGDEDRLQLEWHQALLRGEMPQTIGGGIGQSRLTMLLLQLPHIGQVQCGVWPAAVRESVPSLL</sequence>
<accession>Q83PJ4</accession>
<evidence type="ECO:0000255" key="1">
    <source>
        <dbReference type="HAMAP-Rule" id="MF_00555"/>
    </source>
</evidence>
<name>ASNA_SHIFL</name>